<comment type="function">
    <text evidence="1">May play a key role in the regulation of the intracellular concentration of adenosylhomocysteine.</text>
</comment>
<comment type="catalytic activity">
    <reaction evidence="1">
        <text>S-adenosyl-L-homocysteine + H2O = L-homocysteine + adenosine</text>
        <dbReference type="Rhea" id="RHEA:21708"/>
        <dbReference type="ChEBI" id="CHEBI:15377"/>
        <dbReference type="ChEBI" id="CHEBI:16335"/>
        <dbReference type="ChEBI" id="CHEBI:57856"/>
        <dbReference type="ChEBI" id="CHEBI:58199"/>
        <dbReference type="EC" id="3.13.2.1"/>
    </reaction>
</comment>
<comment type="cofactor">
    <cofactor evidence="1">
        <name>NAD(+)</name>
        <dbReference type="ChEBI" id="CHEBI:57540"/>
    </cofactor>
    <text evidence="1">Binds 1 NAD(+) per subunit.</text>
</comment>
<comment type="pathway">
    <text evidence="1">Amino-acid biosynthesis; L-homocysteine biosynthesis; L-homocysteine from S-adenosyl-L-homocysteine: step 1/1.</text>
</comment>
<comment type="subcellular location">
    <subcellularLocation>
        <location evidence="1">Cytoplasm</location>
    </subcellularLocation>
</comment>
<comment type="similarity">
    <text evidence="1">Belongs to the adenosylhomocysteinase family.</text>
</comment>
<name>SAHH_MYXXD</name>
<proteinExistence type="inferred from homology"/>
<gene>
    <name evidence="1" type="primary">ahcY</name>
    <name type="ordered locus">MXAN_6516</name>
</gene>
<accession>Q1CY84</accession>
<sequence>MTAATKSLKQDYAIADLSLADWGRKEIRIAESEMPALMAIREEYAKTQPLKGARVTGSLHMTIQTAVLVETLQALGAEVRWASCNIFSTQDHAAAALVQAGTPVFAHKGESLKEYWDFTHRIFDFGPAGSDHEGPNMILDDGGDATLLMHLGKRAEKDASVLANPQSEEERELYAAIKAKLAEDATWYTRKSAKILGVTEETTTGVHRLQEMSAKGTLLFRAINVNDSVTKSKFDNLYGCRESLVDGIKRATDVMVAGKIAVVAGYGDVGKGSAQALRALSAQVWVTEIDPICALQAAMEGYRVVTMDYAADKADIFVTATGNKGVITHDHMAKMKDQAIVCNIGHFDNEIEVASLEKYKWEEIKPQVDHIIFPDNKRIILLAKGRLVNLGCGTGHPSYVMSSSFANQTIAQIELYSHSANYEVGKVYVLPKHLDEKVARLQLKKLNAQLTELSQEQADYIGVKTSGPYKPDTYRY</sequence>
<organism>
    <name type="scientific">Myxococcus xanthus (strain DK1622)</name>
    <dbReference type="NCBI Taxonomy" id="246197"/>
    <lineage>
        <taxon>Bacteria</taxon>
        <taxon>Pseudomonadati</taxon>
        <taxon>Myxococcota</taxon>
        <taxon>Myxococcia</taxon>
        <taxon>Myxococcales</taxon>
        <taxon>Cystobacterineae</taxon>
        <taxon>Myxococcaceae</taxon>
        <taxon>Myxococcus</taxon>
    </lineage>
</organism>
<evidence type="ECO:0000255" key="1">
    <source>
        <dbReference type="HAMAP-Rule" id="MF_00563"/>
    </source>
</evidence>
<feature type="chain" id="PRO_1000024738" description="Adenosylhomocysteinase">
    <location>
        <begin position="1"/>
        <end position="476"/>
    </location>
</feature>
<feature type="binding site" evidence="1">
    <location>
        <position position="62"/>
    </location>
    <ligand>
        <name>substrate</name>
    </ligand>
</feature>
<feature type="binding site" evidence="1">
    <location>
        <position position="141"/>
    </location>
    <ligand>
        <name>substrate</name>
    </ligand>
</feature>
<feature type="binding site" evidence="1">
    <location>
        <position position="201"/>
    </location>
    <ligand>
        <name>substrate</name>
    </ligand>
</feature>
<feature type="binding site" evidence="1">
    <location>
        <begin position="202"/>
        <end position="204"/>
    </location>
    <ligand>
        <name>NAD(+)</name>
        <dbReference type="ChEBI" id="CHEBI:57540"/>
    </ligand>
</feature>
<feature type="binding site" evidence="1">
    <location>
        <position position="231"/>
    </location>
    <ligand>
        <name>substrate</name>
    </ligand>
</feature>
<feature type="binding site" evidence="1">
    <location>
        <position position="235"/>
    </location>
    <ligand>
        <name>substrate</name>
    </ligand>
</feature>
<feature type="binding site" evidence="1">
    <location>
        <position position="236"/>
    </location>
    <ligand>
        <name>NAD(+)</name>
        <dbReference type="ChEBI" id="CHEBI:57540"/>
    </ligand>
</feature>
<feature type="binding site" evidence="1">
    <location>
        <begin position="265"/>
        <end position="270"/>
    </location>
    <ligand>
        <name>NAD(+)</name>
        <dbReference type="ChEBI" id="CHEBI:57540"/>
    </ligand>
</feature>
<feature type="binding site" evidence="1">
    <location>
        <position position="288"/>
    </location>
    <ligand>
        <name>NAD(+)</name>
        <dbReference type="ChEBI" id="CHEBI:57540"/>
    </ligand>
</feature>
<feature type="binding site" evidence="1">
    <location>
        <position position="323"/>
    </location>
    <ligand>
        <name>NAD(+)</name>
        <dbReference type="ChEBI" id="CHEBI:57540"/>
    </ligand>
</feature>
<feature type="binding site" evidence="1">
    <location>
        <begin position="344"/>
        <end position="346"/>
    </location>
    <ligand>
        <name>NAD(+)</name>
        <dbReference type="ChEBI" id="CHEBI:57540"/>
    </ligand>
</feature>
<feature type="binding site" evidence="1">
    <location>
        <position position="389"/>
    </location>
    <ligand>
        <name>NAD(+)</name>
        <dbReference type="ChEBI" id="CHEBI:57540"/>
    </ligand>
</feature>
<keyword id="KW-0963">Cytoplasm</keyword>
<keyword id="KW-0378">Hydrolase</keyword>
<keyword id="KW-0520">NAD</keyword>
<keyword id="KW-0554">One-carbon metabolism</keyword>
<keyword id="KW-1185">Reference proteome</keyword>
<protein>
    <recommendedName>
        <fullName evidence="1">Adenosylhomocysteinase</fullName>
        <ecNumber evidence="1">3.13.2.1</ecNumber>
    </recommendedName>
    <alternativeName>
        <fullName evidence="1">S-adenosyl-L-homocysteine hydrolase</fullName>
        <shortName evidence="1">AdoHcyase</shortName>
    </alternativeName>
</protein>
<dbReference type="EC" id="3.13.2.1" evidence="1"/>
<dbReference type="EMBL" id="CP000113">
    <property type="protein sequence ID" value="ABF88127.1"/>
    <property type="molecule type" value="Genomic_DNA"/>
</dbReference>
<dbReference type="RefSeq" id="WP_011556447.1">
    <property type="nucleotide sequence ID" value="NC_008095.1"/>
</dbReference>
<dbReference type="SMR" id="Q1CY84"/>
<dbReference type="STRING" id="246197.MXAN_6516"/>
<dbReference type="EnsemblBacteria" id="ABF88127">
    <property type="protein sequence ID" value="ABF88127"/>
    <property type="gene ID" value="MXAN_6516"/>
</dbReference>
<dbReference type="GeneID" id="41363724"/>
<dbReference type="KEGG" id="mxa:MXAN_6516"/>
<dbReference type="eggNOG" id="COG0499">
    <property type="taxonomic scope" value="Bacteria"/>
</dbReference>
<dbReference type="HOGENOM" id="CLU_025194_2_1_7"/>
<dbReference type="OrthoDB" id="9802717at2"/>
<dbReference type="UniPathway" id="UPA00314">
    <property type="reaction ID" value="UER00076"/>
</dbReference>
<dbReference type="Proteomes" id="UP000002402">
    <property type="component" value="Chromosome"/>
</dbReference>
<dbReference type="GO" id="GO:0005829">
    <property type="term" value="C:cytosol"/>
    <property type="evidence" value="ECO:0007669"/>
    <property type="project" value="TreeGrafter"/>
</dbReference>
<dbReference type="GO" id="GO:0004013">
    <property type="term" value="F:adenosylhomocysteinase activity"/>
    <property type="evidence" value="ECO:0007669"/>
    <property type="project" value="UniProtKB-UniRule"/>
</dbReference>
<dbReference type="GO" id="GO:0071269">
    <property type="term" value="P:L-homocysteine biosynthetic process"/>
    <property type="evidence" value="ECO:0007669"/>
    <property type="project" value="UniProtKB-UniRule"/>
</dbReference>
<dbReference type="GO" id="GO:0006730">
    <property type="term" value="P:one-carbon metabolic process"/>
    <property type="evidence" value="ECO:0007669"/>
    <property type="project" value="UniProtKB-KW"/>
</dbReference>
<dbReference type="GO" id="GO:0033353">
    <property type="term" value="P:S-adenosylmethionine cycle"/>
    <property type="evidence" value="ECO:0007669"/>
    <property type="project" value="TreeGrafter"/>
</dbReference>
<dbReference type="CDD" id="cd00401">
    <property type="entry name" value="SAHH"/>
    <property type="match status" value="1"/>
</dbReference>
<dbReference type="FunFam" id="3.40.50.720:FF:000004">
    <property type="entry name" value="Adenosylhomocysteinase"/>
    <property type="match status" value="1"/>
</dbReference>
<dbReference type="Gene3D" id="3.40.50.1480">
    <property type="entry name" value="Adenosylhomocysteinase-like"/>
    <property type="match status" value="1"/>
</dbReference>
<dbReference type="Gene3D" id="3.40.50.720">
    <property type="entry name" value="NAD(P)-binding Rossmann-like Domain"/>
    <property type="match status" value="1"/>
</dbReference>
<dbReference type="HAMAP" id="MF_00563">
    <property type="entry name" value="AdoHcyase"/>
    <property type="match status" value="1"/>
</dbReference>
<dbReference type="InterPro" id="IPR042172">
    <property type="entry name" value="Adenosylhomocyst_ase-like_sf"/>
</dbReference>
<dbReference type="InterPro" id="IPR000043">
    <property type="entry name" value="Adenosylhomocysteinase-like"/>
</dbReference>
<dbReference type="InterPro" id="IPR015878">
    <property type="entry name" value="Ado_hCys_hydrolase_NAD-bd"/>
</dbReference>
<dbReference type="InterPro" id="IPR036291">
    <property type="entry name" value="NAD(P)-bd_dom_sf"/>
</dbReference>
<dbReference type="InterPro" id="IPR020082">
    <property type="entry name" value="S-Ado-L-homoCys_hydrolase_CS"/>
</dbReference>
<dbReference type="NCBIfam" id="TIGR00936">
    <property type="entry name" value="ahcY"/>
    <property type="match status" value="1"/>
</dbReference>
<dbReference type="NCBIfam" id="NF004005">
    <property type="entry name" value="PRK05476.2-3"/>
    <property type="match status" value="1"/>
</dbReference>
<dbReference type="PANTHER" id="PTHR23420">
    <property type="entry name" value="ADENOSYLHOMOCYSTEINASE"/>
    <property type="match status" value="1"/>
</dbReference>
<dbReference type="PANTHER" id="PTHR23420:SF0">
    <property type="entry name" value="ADENOSYLHOMOCYSTEINASE"/>
    <property type="match status" value="1"/>
</dbReference>
<dbReference type="Pfam" id="PF05221">
    <property type="entry name" value="AdoHcyase"/>
    <property type="match status" value="1"/>
</dbReference>
<dbReference type="Pfam" id="PF00670">
    <property type="entry name" value="AdoHcyase_NAD"/>
    <property type="match status" value="1"/>
</dbReference>
<dbReference type="PIRSF" id="PIRSF001109">
    <property type="entry name" value="Ad_hcy_hydrolase"/>
    <property type="match status" value="1"/>
</dbReference>
<dbReference type="SMART" id="SM00996">
    <property type="entry name" value="AdoHcyase"/>
    <property type="match status" value="1"/>
</dbReference>
<dbReference type="SMART" id="SM00997">
    <property type="entry name" value="AdoHcyase_NAD"/>
    <property type="match status" value="1"/>
</dbReference>
<dbReference type="SUPFAM" id="SSF52283">
    <property type="entry name" value="Formate/glycerate dehydrogenase catalytic domain-like"/>
    <property type="match status" value="1"/>
</dbReference>
<dbReference type="SUPFAM" id="SSF51735">
    <property type="entry name" value="NAD(P)-binding Rossmann-fold domains"/>
    <property type="match status" value="1"/>
</dbReference>
<dbReference type="PROSITE" id="PS00738">
    <property type="entry name" value="ADOHCYASE_1"/>
    <property type="match status" value="1"/>
</dbReference>
<dbReference type="PROSITE" id="PS00739">
    <property type="entry name" value="ADOHCYASE_2"/>
    <property type="match status" value="1"/>
</dbReference>
<reference key="1">
    <citation type="journal article" date="2006" name="Proc. Natl. Acad. Sci. U.S.A.">
        <title>Evolution of sensory complexity recorded in a myxobacterial genome.</title>
        <authorList>
            <person name="Goldman B.S."/>
            <person name="Nierman W.C."/>
            <person name="Kaiser D."/>
            <person name="Slater S.C."/>
            <person name="Durkin A.S."/>
            <person name="Eisen J.A."/>
            <person name="Ronning C.M."/>
            <person name="Barbazuk W.B."/>
            <person name="Blanchard M."/>
            <person name="Field C."/>
            <person name="Halling C."/>
            <person name="Hinkle G."/>
            <person name="Iartchuk O."/>
            <person name="Kim H.S."/>
            <person name="Mackenzie C."/>
            <person name="Madupu R."/>
            <person name="Miller N."/>
            <person name="Shvartsbeyn A."/>
            <person name="Sullivan S.A."/>
            <person name="Vaudin M."/>
            <person name="Wiegand R."/>
            <person name="Kaplan H.B."/>
        </authorList>
    </citation>
    <scope>NUCLEOTIDE SEQUENCE [LARGE SCALE GENOMIC DNA]</scope>
    <source>
        <strain>DK1622</strain>
    </source>
</reference>